<sequence length="479" mass="52955">MSPQTETKASVGFKAGVKEYKLTYYTPEYETKDTDILAAFRVTPQPGVPPEEAGAAVAAESSTGTWTTVWTDGLTSLDRYKGRCYHIEPVPGEETQFIAYVAYPLDLFEEGSVTNMFTSIVGNVFGFKALAALRLEDLRIPPAYTKTFQGPPHGIQVERDKLNKYGRPLLGCTIKPKLGLSAKNYGRAVYECLRGGLDFTKDDENVNSQPFMRWRDRFLFCAEAIYKSQAETGEIKGHYLNATAGTCEEMIKRAVFARELGVPIVMHDYLTGGFTANTSLSHYCRDNGLLLHIHRAMHAVIDRQKNHGMHFRVLAKALRLSGGDHIHAGTVVGKLEGDRESTLGFVDLLRDDYVEKDRSRGIFFTQDWVSLPGVLPVASGGIHVWHMPALTEIFGDDSVLQFGGGTLGHPWGNAPGAVANRVALEACVQARNEGRDLAVEGNEIIREACKWSPELAAACEVWKEITFNFPTIDKLDGQE</sequence>
<name>RBL_ARATH</name>
<feature type="propeptide" id="PRO_0000031119" evidence="1 11">
    <location>
        <begin position="1"/>
        <end position="2"/>
    </location>
</feature>
<feature type="chain" id="PRO_0000031120" description="Ribulose bisphosphate carboxylase large chain">
    <location>
        <begin position="3"/>
        <end position="479"/>
    </location>
</feature>
<feature type="active site" description="Proton acceptor" evidence="1">
    <location>
        <position position="175"/>
    </location>
</feature>
<feature type="active site" description="Proton acceptor" evidence="1">
    <location>
        <position position="294"/>
    </location>
</feature>
<feature type="binding site" evidence="6 8">
    <location>
        <position position="65"/>
    </location>
    <ligand>
        <name>substrate</name>
    </ligand>
</feature>
<feature type="binding site" description="in homodimeric partner" evidence="1 6 8">
    <location>
        <position position="123"/>
    </location>
    <ligand>
        <name>substrate</name>
    </ligand>
</feature>
<feature type="binding site" evidence="6 8">
    <location>
        <begin position="173"/>
        <end position="177"/>
    </location>
    <ligand>
        <name>substrate</name>
    </ligand>
</feature>
<feature type="binding site" evidence="6 8">
    <location>
        <begin position="201"/>
        <end position="204"/>
    </location>
    <ligand>
        <name>substrate</name>
    </ligand>
</feature>
<feature type="binding site" description="via carbamate group" evidence="1 6 8">
    <location>
        <position position="201"/>
    </location>
    <ligand>
        <name>Mg(2+)</name>
        <dbReference type="ChEBI" id="CHEBI:18420"/>
    </ligand>
</feature>
<feature type="binding site" evidence="1 6 8">
    <location>
        <position position="203"/>
    </location>
    <ligand>
        <name>Mg(2+)</name>
        <dbReference type="ChEBI" id="CHEBI:18420"/>
    </ligand>
</feature>
<feature type="binding site" evidence="1 6 8">
    <location>
        <position position="204"/>
    </location>
    <ligand>
        <name>Mg(2+)</name>
        <dbReference type="ChEBI" id="CHEBI:18420"/>
    </ligand>
</feature>
<feature type="binding site" evidence="6 8">
    <location>
        <begin position="294"/>
        <end position="295"/>
    </location>
    <ligand>
        <name>substrate</name>
    </ligand>
</feature>
<feature type="binding site" evidence="1 6 8">
    <location>
        <position position="327"/>
    </location>
    <ligand>
        <name>substrate</name>
    </ligand>
</feature>
<feature type="binding site" evidence="6 8">
    <location>
        <position position="334"/>
    </location>
    <ligand>
        <name>substrate</name>
    </ligand>
</feature>
<feature type="binding site" evidence="6 8">
    <location>
        <begin position="379"/>
        <end position="381"/>
    </location>
    <ligand>
        <name>substrate</name>
    </ligand>
</feature>
<feature type="site" description="Transition state stabilizer" evidence="1">
    <location>
        <position position="334"/>
    </location>
</feature>
<feature type="modified residue" description="N-acetylproline" evidence="11">
    <location>
        <position position="3"/>
    </location>
</feature>
<feature type="modified residue" description="N6-carboxylysine" evidence="1 6 8">
    <location>
        <position position="201"/>
    </location>
</feature>
<feature type="modified residue" description="Phosphoserine" evidence="10">
    <location>
        <position position="208"/>
    </location>
</feature>
<feature type="modified residue" description="Phosphothreonine" evidence="9">
    <location>
        <position position="330"/>
    </location>
</feature>
<feature type="disulfide bond" description="Interchain; in linked form" evidence="1">
    <location>
        <position position="247"/>
    </location>
</feature>
<feature type="helix" evidence="12">
    <location>
        <begin position="21"/>
        <end position="24"/>
    </location>
</feature>
<feature type="strand" evidence="12">
    <location>
        <begin position="36"/>
        <end position="44"/>
    </location>
</feature>
<feature type="helix" evidence="12">
    <location>
        <begin position="50"/>
        <end position="60"/>
    </location>
</feature>
<feature type="turn" evidence="12">
    <location>
        <begin position="61"/>
        <end position="63"/>
    </location>
</feature>
<feature type="helix" evidence="12">
    <location>
        <begin position="70"/>
        <end position="74"/>
    </location>
</feature>
<feature type="helix" evidence="12">
    <location>
        <begin position="77"/>
        <end position="80"/>
    </location>
</feature>
<feature type="strand" evidence="12">
    <location>
        <begin position="83"/>
        <end position="89"/>
    </location>
</feature>
<feature type="strand" evidence="12">
    <location>
        <begin position="97"/>
        <end position="103"/>
    </location>
</feature>
<feature type="helix" evidence="12">
    <location>
        <begin position="105"/>
        <end position="107"/>
    </location>
</feature>
<feature type="helix" evidence="12">
    <location>
        <begin position="113"/>
        <end position="121"/>
    </location>
</feature>
<feature type="helix" evidence="12">
    <location>
        <begin position="124"/>
        <end position="126"/>
    </location>
</feature>
<feature type="strand" evidence="12">
    <location>
        <begin position="130"/>
        <end position="139"/>
    </location>
</feature>
<feature type="helix" evidence="12">
    <location>
        <begin position="142"/>
        <end position="145"/>
    </location>
</feature>
<feature type="strand" evidence="12">
    <location>
        <begin position="151"/>
        <end position="153"/>
    </location>
</feature>
<feature type="helix" evidence="12">
    <location>
        <begin position="155"/>
        <end position="162"/>
    </location>
</feature>
<feature type="strand" evidence="12">
    <location>
        <begin position="169"/>
        <end position="171"/>
    </location>
</feature>
<feature type="strand" evidence="12">
    <location>
        <begin position="175"/>
        <end position="178"/>
    </location>
</feature>
<feature type="helix" evidence="12">
    <location>
        <begin position="182"/>
        <end position="193"/>
    </location>
</feature>
<feature type="turn" evidence="12">
    <location>
        <begin position="194"/>
        <end position="196"/>
    </location>
</feature>
<feature type="strand" evidence="12">
    <location>
        <begin position="198"/>
        <end position="201"/>
    </location>
</feature>
<feature type="strand" evidence="12">
    <location>
        <begin position="207"/>
        <end position="209"/>
    </location>
</feature>
<feature type="helix" evidence="12">
    <location>
        <begin position="214"/>
        <end position="232"/>
    </location>
</feature>
<feature type="strand" evidence="12">
    <location>
        <begin position="237"/>
        <end position="241"/>
    </location>
</feature>
<feature type="helix" evidence="12">
    <location>
        <begin position="247"/>
        <end position="260"/>
    </location>
</feature>
<feature type="strand" evidence="12">
    <location>
        <begin position="263"/>
        <end position="268"/>
    </location>
</feature>
<feature type="helix" evidence="12">
    <location>
        <begin position="269"/>
        <end position="272"/>
    </location>
</feature>
<feature type="helix" evidence="12">
    <location>
        <begin position="274"/>
        <end position="287"/>
    </location>
</feature>
<feature type="strand" evidence="12">
    <location>
        <begin position="290"/>
        <end position="294"/>
    </location>
</feature>
<feature type="helix" evidence="12">
    <location>
        <begin position="298"/>
        <end position="302"/>
    </location>
</feature>
<feature type="strand" evidence="12">
    <location>
        <begin position="307"/>
        <end position="309"/>
    </location>
</feature>
<feature type="helix" evidence="12">
    <location>
        <begin position="311"/>
        <end position="321"/>
    </location>
</feature>
<feature type="strand" evidence="12">
    <location>
        <begin position="324"/>
        <end position="327"/>
    </location>
</feature>
<feature type="strand" evidence="12">
    <location>
        <begin position="331"/>
        <end position="335"/>
    </location>
</feature>
<feature type="helix" evidence="12">
    <location>
        <begin position="339"/>
        <end position="350"/>
    </location>
</feature>
<feature type="strand" evidence="12">
    <location>
        <begin position="352"/>
        <end position="354"/>
    </location>
</feature>
<feature type="helix" evidence="12">
    <location>
        <begin position="358"/>
        <end position="360"/>
    </location>
</feature>
<feature type="strand" evidence="12">
    <location>
        <begin position="375"/>
        <end position="381"/>
    </location>
</feature>
<feature type="helix" evidence="12">
    <location>
        <begin position="384"/>
        <end position="386"/>
    </location>
</feature>
<feature type="helix" evidence="12">
    <location>
        <begin position="387"/>
        <end position="394"/>
    </location>
</feature>
<feature type="strand" evidence="12">
    <location>
        <begin position="396"/>
        <end position="401"/>
    </location>
</feature>
<feature type="helix" evidence="12">
    <location>
        <begin position="404"/>
        <end position="407"/>
    </location>
</feature>
<feature type="helix" evidence="12">
    <location>
        <begin position="413"/>
        <end position="432"/>
    </location>
</feature>
<feature type="helix" evidence="12">
    <location>
        <begin position="437"/>
        <end position="448"/>
    </location>
</feature>
<feature type="turn" evidence="12">
    <location>
        <begin position="449"/>
        <end position="451"/>
    </location>
</feature>
<feature type="helix" evidence="12">
    <location>
        <begin position="453"/>
        <end position="462"/>
    </location>
</feature>
<protein>
    <recommendedName>
        <fullName evidence="1">Ribulose bisphosphate carboxylase large chain</fullName>
        <shortName evidence="1">RuBisCO large subunit</shortName>
        <ecNumber evidence="1">4.1.1.39</ecNumber>
    </recommendedName>
</protein>
<dbReference type="EC" id="4.1.1.39" evidence="1"/>
<dbReference type="EMBL" id="U91966">
    <property type="protein sequence ID" value="AAB68400.1"/>
    <property type="molecule type" value="Genomic_DNA"/>
</dbReference>
<dbReference type="EMBL" id="AP000423">
    <property type="protein sequence ID" value="BAA84393.1"/>
    <property type="molecule type" value="Genomic_DNA"/>
</dbReference>
<dbReference type="EMBL" id="AB003522">
    <property type="protein sequence ID" value="BAA20946.1"/>
    <property type="molecule type" value="Genomic_DNA"/>
</dbReference>
<dbReference type="EMBL" id="D88901">
    <property type="protein sequence ID" value="BAA19595.1"/>
    <property type="molecule type" value="Genomic_DNA"/>
</dbReference>
<dbReference type="RefSeq" id="NP_051067.1">
    <property type="nucleotide sequence ID" value="NC_000932.1"/>
</dbReference>
<dbReference type="PDB" id="5IU0">
    <property type="method" value="X-ray"/>
    <property type="resolution" value="1.50 A"/>
    <property type="chains" value="A/B=1-479"/>
</dbReference>
<dbReference type="PDBsum" id="5IU0"/>
<dbReference type="SMR" id="O03042"/>
<dbReference type="BioGRID" id="29958">
    <property type="interactions" value="11"/>
</dbReference>
<dbReference type="FunCoup" id="O03042">
    <property type="interactions" value="491"/>
</dbReference>
<dbReference type="IntAct" id="O03042">
    <property type="interactions" value="2"/>
</dbReference>
<dbReference type="MINT" id="O03042"/>
<dbReference type="STRING" id="3702.O03042"/>
<dbReference type="iPTMnet" id="O03042"/>
<dbReference type="PaxDb" id="3702-ATCG00490.1"/>
<dbReference type="ProteomicsDB" id="236513"/>
<dbReference type="EnsemblPlants" id="ATCG00490.1">
    <property type="protein sequence ID" value="ATCG00490.1"/>
    <property type="gene ID" value="ATCG00490"/>
</dbReference>
<dbReference type="GeneID" id="844754"/>
<dbReference type="Gramene" id="ATCG00490.1">
    <property type="protein sequence ID" value="ATCG00490.1"/>
    <property type="gene ID" value="ATCG00490"/>
</dbReference>
<dbReference type="KEGG" id="ath:ArthCp030"/>
<dbReference type="Araport" id="ATCG00490"/>
<dbReference type="TAIR" id="ATCG00490">
    <property type="gene designation" value="RBCL"/>
</dbReference>
<dbReference type="eggNOG" id="ENOG502QTI9">
    <property type="taxonomic scope" value="Eukaryota"/>
</dbReference>
<dbReference type="HOGENOM" id="CLU_031450_2_0_1"/>
<dbReference type="InParanoid" id="O03042"/>
<dbReference type="OMA" id="HADPDEM"/>
<dbReference type="BioCyc" id="ARA:ATCG00490-MONOMER"/>
<dbReference type="BioCyc" id="MetaCyc:ATCG00490-MONOMER"/>
<dbReference type="BRENDA" id="4.1.1.39">
    <property type="organism ID" value="399"/>
</dbReference>
<dbReference type="CD-CODE" id="69B7DAF2">
    <property type="entry name" value="Synthetic Condensate 000360"/>
</dbReference>
<dbReference type="PRO" id="PR:O03042"/>
<dbReference type="Proteomes" id="UP000006548">
    <property type="component" value="Chloroplast Pltd"/>
</dbReference>
<dbReference type="ExpressionAtlas" id="O03042">
    <property type="expression patterns" value="baseline and differential"/>
</dbReference>
<dbReference type="GO" id="GO:0048046">
    <property type="term" value="C:apoplast"/>
    <property type="evidence" value="ECO:0007005"/>
    <property type="project" value="TAIR"/>
</dbReference>
<dbReference type="GO" id="GO:0009507">
    <property type="term" value="C:chloroplast"/>
    <property type="evidence" value="ECO:0007005"/>
    <property type="project" value="TAIR"/>
</dbReference>
<dbReference type="GO" id="GO:0009941">
    <property type="term" value="C:chloroplast envelope"/>
    <property type="evidence" value="ECO:0007005"/>
    <property type="project" value="TAIR"/>
</dbReference>
<dbReference type="GO" id="GO:0009570">
    <property type="term" value="C:chloroplast stroma"/>
    <property type="evidence" value="ECO:0007005"/>
    <property type="project" value="TAIR"/>
</dbReference>
<dbReference type="GO" id="GO:0009535">
    <property type="term" value="C:chloroplast thylakoid membrane"/>
    <property type="evidence" value="ECO:0007005"/>
    <property type="project" value="TAIR"/>
</dbReference>
<dbReference type="GO" id="GO:0022626">
    <property type="term" value="C:cytosolic ribosome"/>
    <property type="evidence" value="ECO:0007005"/>
    <property type="project" value="TAIR"/>
</dbReference>
<dbReference type="GO" id="GO:0009505">
    <property type="term" value="C:plant-type cell wall"/>
    <property type="evidence" value="ECO:0007005"/>
    <property type="project" value="TAIR"/>
</dbReference>
<dbReference type="GO" id="GO:0009536">
    <property type="term" value="C:plastid"/>
    <property type="evidence" value="ECO:0007005"/>
    <property type="project" value="TAIR"/>
</dbReference>
<dbReference type="GO" id="GO:0009579">
    <property type="term" value="C:thylakoid"/>
    <property type="evidence" value="ECO:0007005"/>
    <property type="project" value="TAIR"/>
</dbReference>
<dbReference type="GO" id="GO:0000287">
    <property type="term" value="F:magnesium ion binding"/>
    <property type="evidence" value="ECO:0007669"/>
    <property type="project" value="UniProtKB-UniRule"/>
</dbReference>
<dbReference type="GO" id="GO:0004497">
    <property type="term" value="F:monooxygenase activity"/>
    <property type="evidence" value="ECO:0007669"/>
    <property type="project" value="UniProtKB-KW"/>
</dbReference>
<dbReference type="GO" id="GO:0003729">
    <property type="term" value="F:mRNA binding"/>
    <property type="evidence" value="ECO:0000314"/>
    <property type="project" value="TAIR"/>
</dbReference>
<dbReference type="GO" id="GO:0016984">
    <property type="term" value="F:ribulose-bisphosphate carboxylase activity"/>
    <property type="evidence" value="ECO:0007669"/>
    <property type="project" value="UniProtKB-UniRule"/>
</dbReference>
<dbReference type="GO" id="GO:0009853">
    <property type="term" value="P:photorespiration"/>
    <property type="evidence" value="ECO:0007669"/>
    <property type="project" value="UniProtKB-KW"/>
</dbReference>
<dbReference type="GO" id="GO:0019253">
    <property type="term" value="P:reductive pentose-phosphate cycle"/>
    <property type="evidence" value="ECO:0007669"/>
    <property type="project" value="UniProtKB-UniRule"/>
</dbReference>
<dbReference type="GO" id="GO:0009737">
    <property type="term" value="P:response to abscisic acid"/>
    <property type="evidence" value="ECO:0000270"/>
    <property type="project" value="TAIR"/>
</dbReference>
<dbReference type="GO" id="GO:0046686">
    <property type="term" value="P:response to cadmium ion"/>
    <property type="evidence" value="ECO:0000270"/>
    <property type="project" value="TAIR"/>
</dbReference>
<dbReference type="CDD" id="cd08212">
    <property type="entry name" value="RuBisCO_large_I"/>
    <property type="match status" value="1"/>
</dbReference>
<dbReference type="FunFam" id="3.20.20.110:FF:000001">
    <property type="entry name" value="Ribulose bisphosphate carboxylase large chain"/>
    <property type="match status" value="1"/>
</dbReference>
<dbReference type="FunFam" id="3.30.70.150:FF:000001">
    <property type="entry name" value="Ribulose bisphosphate carboxylase large chain"/>
    <property type="match status" value="1"/>
</dbReference>
<dbReference type="Gene3D" id="3.20.20.110">
    <property type="entry name" value="Ribulose bisphosphate carboxylase, large subunit, C-terminal domain"/>
    <property type="match status" value="1"/>
</dbReference>
<dbReference type="Gene3D" id="3.30.70.150">
    <property type="entry name" value="RuBisCO large subunit, N-terminal domain"/>
    <property type="match status" value="1"/>
</dbReference>
<dbReference type="HAMAP" id="MF_01338">
    <property type="entry name" value="RuBisCO_L_type1"/>
    <property type="match status" value="1"/>
</dbReference>
<dbReference type="InterPro" id="IPR033966">
    <property type="entry name" value="RuBisCO"/>
</dbReference>
<dbReference type="InterPro" id="IPR020878">
    <property type="entry name" value="RuBisCo_large_chain_AS"/>
</dbReference>
<dbReference type="InterPro" id="IPR000685">
    <property type="entry name" value="RuBisCO_lsu_C"/>
</dbReference>
<dbReference type="InterPro" id="IPR036376">
    <property type="entry name" value="RuBisCO_lsu_C_sf"/>
</dbReference>
<dbReference type="InterPro" id="IPR017443">
    <property type="entry name" value="RuBisCO_lsu_fd_N"/>
</dbReference>
<dbReference type="InterPro" id="IPR036422">
    <property type="entry name" value="RuBisCO_lsu_N_sf"/>
</dbReference>
<dbReference type="InterPro" id="IPR020888">
    <property type="entry name" value="RuBisCO_lsuI"/>
</dbReference>
<dbReference type="NCBIfam" id="NF003252">
    <property type="entry name" value="PRK04208.1"/>
    <property type="match status" value="1"/>
</dbReference>
<dbReference type="PANTHER" id="PTHR42704">
    <property type="entry name" value="RIBULOSE BISPHOSPHATE CARBOXYLASE"/>
    <property type="match status" value="1"/>
</dbReference>
<dbReference type="PANTHER" id="PTHR42704:SF16">
    <property type="entry name" value="RIBULOSE BISPHOSPHATE CARBOXYLASE LARGE CHAIN"/>
    <property type="match status" value="1"/>
</dbReference>
<dbReference type="Pfam" id="PF00016">
    <property type="entry name" value="RuBisCO_large"/>
    <property type="match status" value="1"/>
</dbReference>
<dbReference type="Pfam" id="PF02788">
    <property type="entry name" value="RuBisCO_large_N"/>
    <property type="match status" value="1"/>
</dbReference>
<dbReference type="SFLD" id="SFLDG01052">
    <property type="entry name" value="RuBisCO"/>
    <property type="match status" value="1"/>
</dbReference>
<dbReference type="SFLD" id="SFLDS00014">
    <property type="entry name" value="RuBisCO"/>
    <property type="match status" value="1"/>
</dbReference>
<dbReference type="SFLD" id="SFLDG00301">
    <property type="entry name" value="RuBisCO-like_proteins"/>
    <property type="match status" value="1"/>
</dbReference>
<dbReference type="SUPFAM" id="SSF51649">
    <property type="entry name" value="RuBisCo, C-terminal domain"/>
    <property type="match status" value="1"/>
</dbReference>
<dbReference type="SUPFAM" id="SSF54966">
    <property type="entry name" value="RuBisCO, large subunit, small (N-terminal) domain"/>
    <property type="match status" value="1"/>
</dbReference>
<dbReference type="PROSITE" id="PS00157">
    <property type="entry name" value="RUBISCO_LARGE"/>
    <property type="match status" value="1"/>
</dbReference>
<reference key="1">
    <citation type="online journal article" date="1997" name="Plant Gene Register">
        <title>DNA sequence of ribulose-1,5-bisphosphate carboxylase/oxygenase large subunit from Arabidopsis thaliana.</title>
        <authorList>
            <person name="Zhu G."/>
            <person name="Jensen R.G."/>
            <person name="Bohnert H.J."/>
        </authorList>
        <locator>PGR97-074</locator>
    </citation>
    <scope>NUCLEOTIDE SEQUENCE [GENOMIC DNA]</scope>
    <source>
        <strain>cv. Landsberg erecta</strain>
    </source>
</reference>
<reference key="2">
    <citation type="journal article" date="1999" name="DNA Res.">
        <title>Complete structure of the chloroplast genome of Arabidopsis thaliana.</title>
        <authorList>
            <person name="Sato S."/>
            <person name="Nakamura Y."/>
            <person name="Kaneko T."/>
            <person name="Asamizu E."/>
            <person name="Tabata S."/>
        </authorList>
    </citation>
    <scope>NUCLEOTIDE SEQUENCE [LARGE SCALE GENOMIC DNA]</scope>
    <source>
        <strain>cv. Columbia</strain>
    </source>
</reference>
<reference key="3">
    <citation type="journal article" date="1997" name="Plant Physiol.">
        <title>Evidence for transcriptional regulation of plastid photosynthesis genes in Arabidopsis thaliana roots.</title>
        <authorList>
            <person name="Isono K."/>
            <person name="Niwa Y."/>
            <person name="Satoh K."/>
            <person name="Kobayashi H."/>
        </authorList>
    </citation>
    <scope>NUCLEOTIDE SEQUENCE [GENOMIC DNA] OF 1-49</scope>
    <source>
        <strain>cv. Columbia</strain>
    </source>
</reference>
<reference key="4">
    <citation type="journal article" date="1997" name="J. Plant Res.">
        <title>Morphological, physiological and molecular genetic characterization of Arabidopsis himalaica, with reference to the analogous features of A. thaliana.</title>
        <authorList>
            <person name="Tsukaya H."/>
            <person name="Ikeda H."/>
            <person name="Yokoyama J."/>
            <person name="Matsuura K."/>
            <person name="Kuroiwa H."/>
            <person name="Kuroiwa T."/>
            <person name="Iwatsuki K."/>
        </authorList>
    </citation>
    <scope>NUCLEOTIDE SEQUENCE [GENOMIC DNA] OF 16-446</scope>
</reference>
<reference key="5">
    <citation type="journal article" date="2003" name="Mol. Cell. Proteomics">
        <title>Proteomics of the chloroplast envelope membranes from Arabidopsis thaliana.</title>
        <authorList>
            <person name="Ferro M."/>
            <person name="Salvi D."/>
            <person name="Brugiere S."/>
            <person name="Miras S."/>
            <person name="Kowalski S."/>
            <person name="Louwagie M."/>
            <person name="Garin J."/>
            <person name="Joyard J."/>
            <person name="Rolland N."/>
        </authorList>
    </citation>
    <scope>IDENTIFICATION BY MASS SPECTROMETRY</scope>
    <scope>SUBCELLULAR LOCATION [LARGE SCALE ANALYSIS]</scope>
    <source>
        <strain>cv. Wassilewskija</strain>
    </source>
</reference>
<reference key="6">
    <citation type="journal article" date="2009" name="J. Proteomics">
        <title>Phosphoproteomic analysis of nuclei-enriched fractions from Arabidopsis thaliana.</title>
        <authorList>
            <person name="Jones A.M.E."/>
            <person name="MacLean D."/>
            <person name="Studholme D.J."/>
            <person name="Serna-Sanz A."/>
            <person name="Andreasson E."/>
            <person name="Rathjen J.P."/>
            <person name="Peck S.C."/>
        </authorList>
    </citation>
    <scope>IDENTIFICATION BY MASS SPECTROMETRY [LARGE SCALE ANALYSIS]</scope>
    <source>
        <strain>cv. Columbia</strain>
    </source>
</reference>
<reference key="7">
    <citation type="journal article" date="2009" name="Plant Physiol.">
        <title>Large-scale Arabidopsis phosphoproteome profiling reveals novel chloroplast kinase substrates and phosphorylation networks.</title>
        <authorList>
            <person name="Reiland S."/>
            <person name="Messerli G."/>
            <person name="Baerenfaller K."/>
            <person name="Gerrits B."/>
            <person name="Endler A."/>
            <person name="Grossmann J."/>
            <person name="Gruissem W."/>
            <person name="Baginsky S."/>
        </authorList>
    </citation>
    <scope>PHOSPHORYLATION [LARGE SCALE ANALYSIS] AT THR-330</scope>
    <scope>IDENTIFICATION BY MASS SPECTROMETRY [LARGE SCALE ANALYSIS]</scope>
</reference>
<reference key="8">
    <citation type="journal article" date="2011" name="Plant Mol. Biol.">
        <title>Initial characteristics of RbcX proteins from Arabidopsis thaliana.</title>
        <authorList>
            <person name="Kolesinski P."/>
            <person name="Piechota J."/>
            <person name="Szczepaniak A."/>
        </authorList>
    </citation>
    <scope>INTERACTION WITH RBCX1 AND RBCX2</scope>
</reference>
<reference key="9">
    <citation type="journal article" date="2012" name="J. Proteome Res.">
        <title>Identification of phosphoproteins in Arabidopsis thaliana leaves using polyethylene glycol fractionation, immobilized metal-ion affinity chromatography, two-dimensional gel electrophoresis and mass spectrometry.</title>
        <authorList>
            <person name="Aryal U.K."/>
            <person name="Krochko J.E."/>
            <person name="Ross A.R."/>
        </authorList>
    </citation>
    <scope>PHOSPHORYLATION [LARGE SCALE ANALYSIS] AT SER-208</scope>
    <scope>IDENTIFICATION BY MASS SPECTROMETRY [LARGE SCALE ANALYSIS]</scope>
</reference>
<reference key="10">
    <citation type="journal article" date="2012" name="Mol. Cell. Proteomics">
        <title>Comparative large-scale characterisation of plant vs. mammal proteins reveals similar and idiosyncratic N-alpha acetylation features.</title>
        <authorList>
            <person name="Bienvenut W.V."/>
            <person name="Sumpton D."/>
            <person name="Martinez A."/>
            <person name="Lilla S."/>
            <person name="Espagne C."/>
            <person name="Meinnel T."/>
            <person name="Giglione C."/>
        </authorList>
    </citation>
    <scope>ACETYLATION [LARGE SCALE ANALYSIS] AT PRO-3</scope>
    <scope>CLEAVAGE OF PROPEPTIDE [LARGE SCALE ANALYSIS] AFTER SER-2</scope>
    <scope>IDENTIFICATION BY MASS SPECTROMETRY [LARGE SCALE ANALYSIS]</scope>
</reference>
<reference key="11">
    <citation type="journal article" date="2015" name="PLoS ONE">
        <title>Identification of Interactions between Abscisic Acid and Ribulose-1,5-Bisphosphate Carboxylase/Oxygenase.</title>
        <authorList>
            <person name="Galka M.M."/>
            <person name="Rajagopalan N."/>
            <person name="Buhrow L.M."/>
            <person name="Nelson K.M."/>
            <person name="Switala J."/>
            <person name="Cutler A.J."/>
            <person name="Palmer D.R."/>
            <person name="Loewen P.C."/>
            <person name="Abrams S.R."/>
            <person name="Loewen M.C."/>
        </authorList>
    </citation>
    <scope>INTERACTION WITH ABSCISIC ACID</scope>
</reference>
<reference key="12">
    <citation type="journal article" date="2017" name="Science">
        <title>Plant RuBisCo assembly in E. coli with five chloroplast chaperones including BSD2.</title>
        <authorList>
            <person name="Aigner H."/>
            <person name="Wilson R.H."/>
            <person name="Bracher A."/>
            <person name="Calisse L."/>
            <person name="Bhat J.Y."/>
            <person name="Hartl F.U."/>
            <person name="Hayer-Hartl M."/>
        </authorList>
    </citation>
    <scope>INTERACTION WITH BSD2</scope>
</reference>
<reference evidence="8" key="13">
    <citation type="journal article" date="2018" name="Acta Crystallogr. D">
        <title>Structure of Rubisco from Arabidopsis thaliana in complex with 2-carboxyarabinitol-1,5-bisphosphate.</title>
        <authorList>
            <person name="Valegaard K."/>
            <person name="Hasse D."/>
            <person name="Andersson I."/>
            <person name="Gunn L.H."/>
        </authorList>
    </citation>
    <scope>X-RAY CRYSTALLOGRAPHY (1.50 ANGSTROMS) IN COMPLEX WITH TRANSITION-STATE ANALOG 2-CABP AND MAGNESIUM ION</scope>
    <scope>SUBUNIT</scope>
    <scope>CARBOXYLATION AT LYS-201</scope>
</reference>
<proteinExistence type="evidence at protein level"/>
<evidence type="ECO:0000255" key="1">
    <source>
        <dbReference type="HAMAP-Rule" id="MF_01338"/>
    </source>
</evidence>
<evidence type="ECO:0000269" key="2">
    <source>
    </source>
</evidence>
<evidence type="ECO:0000269" key="3">
    <source>
    </source>
</evidence>
<evidence type="ECO:0000269" key="4">
    <source>
    </source>
</evidence>
<evidence type="ECO:0000269" key="5">
    <source>
    </source>
</evidence>
<evidence type="ECO:0000269" key="6">
    <source>
    </source>
</evidence>
<evidence type="ECO:0000305" key="7">
    <source>
    </source>
</evidence>
<evidence type="ECO:0007744" key="8">
    <source>
        <dbReference type="PDB" id="5IU0"/>
    </source>
</evidence>
<evidence type="ECO:0007744" key="9">
    <source>
    </source>
</evidence>
<evidence type="ECO:0007744" key="10">
    <source>
    </source>
</evidence>
<evidence type="ECO:0007744" key="11">
    <source>
    </source>
</evidence>
<evidence type="ECO:0007829" key="12">
    <source>
        <dbReference type="PDB" id="5IU0"/>
    </source>
</evidence>
<geneLocation type="chloroplast"/>
<keyword id="KW-0002">3D-structure</keyword>
<keyword id="KW-0007">Acetylation</keyword>
<keyword id="KW-0113">Calvin cycle</keyword>
<keyword id="KW-0120">Carbon dioxide fixation</keyword>
<keyword id="KW-0150">Chloroplast</keyword>
<keyword id="KW-1015">Disulfide bond</keyword>
<keyword id="KW-0456">Lyase</keyword>
<keyword id="KW-0460">Magnesium</keyword>
<keyword id="KW-0479">Metal-binding</keyword>
<keyword id="KW-0503">Monooxygenase</keyword>
<keyword id="KW-0560">Oxidoreductase</keyword>
<keyword id="KW-0597">Phosphoprotein</keyword>
<keyword id="KW-0601">Photorespiration</keyword>
<keyword id="KW-0602">Photosynthesis</keyword>
<keyword id="KW-0934">Plastid</keyword>
<keyword id="KW-1185">Reference proteome</keyword>
<comment type="function">
    <text evidence="4 7">RuBisCO catalyzes two reactions: the carboxylation of D-ribulose 1,5-bisphosphate, the primary event in carbon dioxide fixation, as well as the oxidative fragmentation of the pentose substrate in the photorespiration process. Both reactions occur simultaneously and in competition at the same active site (Probable). Binds to abscisic acid (ABA) (PubMed:26197050).</text>
</comment>
<comment type="catalytic activity">
    <reaction evidence="1 7">
        <text>2 (2R)-3-phosphoglycerate + 2 H(+) = D-ribulose 1,5-bisphosphate + CO2 + H2O</text>
        <dbReference type="Rhea" id="RHEA:23124"/>
        <dbReference type="ChEBI" id="CHEBI:15377"/>
        <dbReference type="ChEBI" id="CHEBI:15378"/>
        <dbReference type="ChEBI" id="CHEBI:16526"/>
        <dbReference type="ChEBI" id="CHEBI:57870"/>
        <dbReference type="ChEBI" id="CHEBI:58272"/>
        <dbReference type="EC" id="4.1.1.39"/>
    </reaction>
</comment>
<comment type="catalytic activity">
    <reaction evidence="1 7">
        <text>D-ribulose 1,5-bisphosphate + O2 = 2-phosphoglycolate + (2R)-3-phosphoglycerate + 2 H(+)</text>
        <dbReference type="Rhea" id="RHEA:36631"/>
        <dbReference type="ChEBI" id="CHEBI:15378"/>
        <dbReference type="ChEBI" id="CHEBI:15379"/>
        <dbReference type="ChEBI" id="CHEBI:57870"/>
        <dbReference type="ChEBI" id="CHEBI:58033"/>
        <dbReference type="ChEBI" id="CHEBI:58272"/>
    </reaction>
</comment>
<comment type="cofactor">
    <cofactor evidence="1 6">
        <name>Mg(2+)</name>
        <dbReference type="ChEBI" id="CHEBI:18420"/>
    </cofactor>
    <text evidence="1 6">Binds 1 Mg(2+) ion per subunit.</text>
</comment>
<comment type="subunit">
    <text evidence="3 5 6">Heterohexadecamer of 8 large chains and 8 small chains; disulfide-linked. The disulfide link is formed within the large subunit homodimers (PubMed:29372894). Interacts with RBCX1 and RBCX1 (PubMed:21922322). An intermediate complex made of eight RbcL subunits interacts with the chaperone BSD2 (PubMed:29217567).</text>
</comment>
<comment type="subcellular location">
    <subcellularLocation>
        <location evidence="1 2">Plastid</location>
        <location evidence="1 2">Chloroplast</location>
    </subcellularLocation>
</comment>
<comment type="PTM">
    <text evidence="1">The disulfide bond which can form in the large chain dimeric partners within the hexadecamer appears to be associated with oxidative stress and protein turnover.</text>
</comment>
<comment type="miscellaneous">
    <text evidence="1 6">The basic functional RuBisCO is composed of a large chain homodimer in a 'head-to-tail' conformation. In form I RuBisCO this homodimer is arranged in a barrel-like tetramer with the small subunits forming a tetrameric 'cap' on each end of the 'barrel'.</text>
</comment>
<comment type="similarity">
    <text evidence="1">Belongs to the RuBisCO large chain family. Type I subfamily.</text>
</comment>
<accession>O03042</accession>
<gene>
    <name evidence="1" type="primary">rbcL</name>
    <name type="ordered locus">AtCg00490</name>
</gene>
<organism>
    <name type="scientific">Arabidopsis thaliana</name>
    <name type="common">Mouse-ear cress</name>
    <dbReference type="NCBI Taxonomy" id="3702"/>
    <lineage>
        <taxon>Eukaryota</taxon>
        <taxon>Viridiplantae</taxon>
        <taxon>Streptophyta</taxon>
        <taxon>Embryophyta</taxon>
        <taxon>Tracheophyta</taxon>
        <taxon>Spermatophyta</taxon>
        <taxon>Magnoliopsida</taxon>
        <taxon>eudicotyledons</taxon>
        <taxon>Gunneridae</taxon>
        <taxon>Pentapetalae</taxon>
        <taxon>rosids</taxon>
        <taxon>malvids</taxon>
        <taxon>Brassicales</taxon>
        <taxon>Brassicaceae</taxon>
        <taxon>Camelineae</taxon>
        <taxon>Arabidopsis</taxon>
    </lineage>
</organism>